<dbReference type="EMBL" id="AP009552">
    <property type="protein sequence ID" value="BAG00070.1"/>
    <property type="molecule type" value="Genomic_DNA"/>
</dbReference>
<dbReference type="RefSeq" id="WP_012263955.1">
    <property type="nucleotide sequence ID" value="NC_010296.1"/>
</dbReference>
<dbReference type="SMR" id="B0JM53"/>
<dbReference type="STRING" id="449447.MAE_02480"/>
<dbReference type="PaxDb" id="449447-MAE_02480"/>
<dbReference type="EnsemblBacteria" id="BAG00070">
    <property type="protein sequence ID" value="BAG00070"/>
    <property type="gene ID" value="MAE_02480"/>
</dbReference>
<dbReference type="KEGG" id="mar:MAE_02480"/>
<dbReference type="PATRIC" id="fig|449447.4.peg.228"/>
<dbReference type="eggNOG" id="COG1195">
    <property type="taxonomic scope" value="Bacteria"/>
</dbReference>
<dbReference type="HOGENOM" id="CLU_040267_0_1_3"/>
<dbReference type="BioCyc" id="MAER449447:MAE_RS01115-MONOMER"/>
<dbReference type="Proteomes" id="UP000001510">
    <property type="component" value="Chromosome"/>
</dbReference>
<dbReference type="GO" id="GO:0005737">
    <property type="term" value="C:cytoplasm"/>
    <property type="evidence" value="ECO:0007669"/>
    <property type="project" value="UniProtKB-SubCell"/>
</dbReference>
<dbReference type="GO" id="GO:0005524">
    <property type="term" value="F:ATP binding"/>
    <property type="evidence" value="ECO:0007669"/>
    <property type="project" value="UniProtKB-UniRule"/>
</dbReference>
<dbReference type="GO" id="GO:0016887">
    <property type="term" value="F:ATP hydrolysis activity"/>
    <property type="evidence" value="ECO:0007669"/>
    <property type="project" value="InterPro"/>
</dbReference>
<dbReference type="GO" id="GO:0003697">
    <property type="term" value="F:single-stranded DNA binding"/>
    <property type="evidence" value="ECO:0007669"/>
    <property type="project" value="UniProtKB-UniRule"/>
</dbReference>
<dbReference type="GO" id="GO:0006260">
    <property type="term" value="P:DNA replication"/>
    <property type="evidence" value="ECO:0007669"/>
    <property type="project" value="UniProtKB-UniRule"/>
</dbReference>
<dbReference type="GO" id="GO:0000731">
    <property type="term" value="P:DNA synthesis involved in DNA repair"/>
    <property type="evidence" value="ECO:0007669"/>
    <property type="project" value="TreeGrafter"/>
</dbReference>
<dbReference type="GO" id="GO:0006302">
    <property type="term" value="P:double-strand break repair"/>
    <property type="evidence" value="ECO:0007669"/>
    <property type="project" value="InterPro"/>
</dbReference>
<dbReference type="GO" id="GO:0009432">
    <property type="term" value="P:SOS response"/>
    <property type="evidence" value="ECO:0007669"/>
    <property type="project" value="UniProtKB-UniRule"/>
</dbReference>
<dbReference type="CDD" id="cd03242">
    <property type="entry name" value="ABC_RecF"/>
    <property type="match status" value="1"/>
</dbReference>
<dbReference type="Gene3D" id="3.40.50.300">
    <property type="entry name" value="P-loop containing nucleotide triphosphate hydrolases"/>
    <property type="match status" value="1"/>
</dbReference>
<dbReference type="Gene3D" id="1.20.1050.90">
    <property type="entry name" value="RecF/RecN/SMC, N-terminal domain"/>
    <property type="match status" value="1"/>
</dbReference>
<dbReference type="HAMAP" id="MF_00365">
    <property type="entry name" value="RecF"/>
    <property type="match status" value="1"/>
</dbReference>
<dbReference type="InterPro" id="IPR001238">
    <property type="entry name" value="DNA-binding_RecF"/>
</dbReference>
<dbReference type="InterPro" id="IPR018078">
    <property type="entry name" value="DNA-binding_RecF_CS"/>
</dbReference>
<dbReference type="InterPro" id="IPR027417">
    <property type="entry name" value="P-loop_NTPase"/>
</dbReference>
<dbReference type="InterPro" id="IPR038729">
    <property type="entry name" value="Rad50/SbcC_AAA"/>
</dbReference>
<dbReference type="InterPro" id="IPR042174">
    <property type="entry name" value="RecF_2"/>
</dbReference>
<dbReference type="NCBIfam" id="TIGR00611">
    <property type="entry name" value="recf"/>
    <property type="match status" value="1"/>
</dbReference>
<dbReference type="PANTHER" id="PTHR32182">
    <property type="entry name" value="DNA REPLICATION AND REPAIR PROTEIN RECF"/>
    <property type="match status" value="1"/>
</dbReference>
<dbReference type="PANTHER" id="PTHR32182:SF0">
    <property type="entry name" value="DNA REPLICATION AND REPAIR PROTEIN RECF"/>
    <property type="match status" value="1"/>
</dbReference>
<dbReference type="Pfam" id="PF13476">
    <property type="entry name" value="AAA_23"/>
    <property type="match status" value="1"/>
</dbReference>
<dbReference type="SUPFAM" id="SSF52540">
    <property type="entry name" value="P-loop containing nucleoside triphosphate hydrolases"/>
    <property type="match status" value="1"/>
</dbReference>
<dbReference type="PROSITE" id="PS00617">
    <property type="entry name" value="RECF_1"/>
    <property type="match status" value="1"/>
</dbReference>
<dbReference type="PROSITE" id="PS00618">
    <property type="entry name" value="RECF_2"/>
    <property type="match status" value="1"/>
</dbReference>
<accession>B0JM53</accession>
<organism>
    <name type="scientific">Microcystis aeruginosa (strain NIES-843 / IAM M-2473)</name>
    <dbReference type="NCBI Taxonomy" id="449447"/>
    <lineage>
        <taxon>Bacteria</taxon>
        <taxon>Bacillati</taxon>
        <taxon>Cyanobacteriota</taxon>
        <taxon>Cyanophyceae</taxon>
        <taxon>Oscillatoriophycideae</taxon>
        <taxon>Chroococcales</taxon>
        <taxon>Microcystaceae</taxon>
        <taxon>Microcystis</taxon>
    </lineage>
</organism>
<reference key="1">
    <citation type="journal article" date="2007" name="DNA Res.">
        <title>Complete genomic structure of the bloom-forming toxic cyanobacterium Microcystis aeruginosa NIES-843.</title>
        <authorList>
            <person name="Kaneko T."/>
            <person name="Nakajima N."/>
            <person name="Okamoto S."/>
            <person name="Suzuki I."/>
            <person name="Tanabe Y."/>
            <person name="Tamaoki M."/>
            <person name="Nakamura Y."/>
            <person name="Kasai F."/>
            <person name="Watanabe A."/>
            <person name="Kawashima K."/>
            <person name="Kishida Y."/>
            <person name="Ono A."/>
            <person name="Shimizu Y."/>
            <person name="Takahashi C."/>
            <person name="Minami C."/>
            <person name="Fujishiro T."/>
            <person name="Kohara M."/>
            <person name="Katoh M."/>
            <person name="Nakazaki N."/>
            <person name="Nakayama S."/>
            <person name="Yamada M."/>
            <person name="Tabata S."/>
            <person name="Watanabe M.M."/>
        </authorList>
    </citation>
    <scope>NUCLEOTIDE SEQUENCE [LARGE SCALE GENOMIC DNA]</scope>
    <source>
        <strain>NIES-843 / IAM M-247</strain>
    </source>
</reference>
<comment type="function">
    <text evidence="1">The RecF protein is involved in DNA metabolism; it is required for DNA replication and normal SOS inducibility. RecF binds preferentially to single-stranded, linear DNA. It also seems to bind ATP.</text>
</comment>
<comment type="subcellular location">
    <subcellularLocation>
        <location evidence="1">Cytoplasm</location>
    </subcellularLocation>
</comment>
<comment type="similarity">
    <text evidence="1">Belongs to the RecF family.</text>
</comment>
<protein>
    <recommendedName>
        <fullName evidence="1">DNA replication and repair protein RecF</fullName>
    </recommendedName>
</protein>
<sequence length="375" mass="43314">MYLEHLHLHSFRNYAEQVLKFESKKTILLGNNAQGKSNLLEAIELLATLKSHRVSKDRDLVLESDSEARIFARVNRLYGASELSLILRSSGRRTVIRDRQPLRRHLDFLGVINAVQFSSLDLDLVRGGPEARRDWLDTLLIQLEPLYVHILQQYNQVLRQRNALLKEIRKQELEGKVYGDLSQLKLWDLQLAETGSRVTRRRARVLQRLIPLAQKWHESISGKTELLELQYIPNVPWVEDDVNGVQRAFLDKIETRRLAEKQLGTSVVGPHRDEVDFLINQNPAKSYGSQGQQRTLVLALKLAELQLLEQIIGEPPLLLLDDVLAELDIERQNQLLDAIEDRFQTLITTTHLSSFESRWLQSSQVFSVKKGHIFY</sequence>
<evidence type="ECO:0000255" key="1">
    <source>
        <dbReference type="HAMAP-Rule" id="MF_00365"/>
    </source>
</evidence>
<feature type="chain" id="PRO_1000079592" description="DNA replication and repair protein RecF">
    <location>
        <begin position="1"/>
        <end position="375"/>
    </location>
</feature>
<feature type="binding site" evidence="1">
    <location>
        <begin position="30"/>
        <end position="37"/>
    </location>
    <ligand>
        <name>ATP</name>
        <dbReference type="ChEBI" id="CHEBI:30616"/>
    </ligand>
</feature>
<gene>
    <name evidence="1" type="primary">recF</name>
    <name type="ordered locus">MAE_02480</name>
</gene>
<name>RECF_MICAN</name>
<proteinExistence type="inferred from homology"/>
<keyword id="KW-0067">ATP-binding</keyword>
<keyword id="KW-0963">Cytoplasm</keyword>
<keyword id="KW-0227">DNA damage</keyword>
<keyword id="KW-0234">DNA repair</keyword>
<keyword id="KW-0235">DNA replication</keyword>
<keyword id="KW-0238">DNA-binding</keyword>
<keyword id="KW-0547">Nucleotide-binding</keyword>
<keyword id="KW-0742">SOS response</keyword>